<gene>
    <name type="primary">Tfec</name>
    <name type="synonym">Tcfec</name>
</gene>
<evidence type="ECO:0000250" key="1"/>
<evidence type="ECO:0000255" key="2">
    <source>
        <dbReference type="PROSITE-ProRule" id="PRU00981"/>
    </source>
</evidence>
<evidence type="ECO:0000269" key="3">
    <source>
    </source>
</evidence>
<evidence type="ECO:0000305" key="4"/>
<accession>Q63302</accession>
<sequence>MTLDHRLFSQTLKRAQPLAASCMPLAEHGPRSPDSDAGCAGNPFTNPLALGKEDGVVEWRLSGSILDVYSGEQGISPVNTGLMNASCPSILPMKKEIAETDTRALAKERQKKDNHNLIERRRRYNINYRIKELGTLIPKSNDPDIRWNKGTILKASVDYIKWLQKEQQRARELEHRQKKLEHANRQLMLRIQELEIQARAHGLPILASLGTADFGTHITKQQTHSEKNSVGCCQQLTPSQGTSPEFYEQAVAFSDPLSHFTDLSFSAALKEEQRLDGMLLSDTICPFGTDPLLSAISPAVSKASSRSSLSSEDGDEL</sequence>
<reference key="1">
    <citation type="journal article" date="1993" name="Mol. Cell. Biol.">
        <title>TFEC, a basic helix-loop-helix protein, forms heterodimers with TFE3 and inhibits TFE3-dependent transcription activation.</title>
        <authorList>
            <person name="Zhao G.Q."/>
            <person name="Zhao Q."/>
            <person name="Zhou X."/>
            <person name="Mattei M.-G."/>
            <person name="de Crombrugghe B."/>
        </authorList>
    </citation>
    <scope>NUCLEOTIDE SEQUENCE [MRNA]</scope>
    <scope>FUNCTION</scope>
    <scope>SUBUNIT</scope>
    <scope>DEVELOPMENTAL STAGE</scope>
    <scope>TISSUE SPECIFICITY</scope>
    <source>
        <tissue>Chondrosarcoma</tissue>
    </source>
</reference>
<comment type="function">
    <text evidence="1 3">Transcriptional regulator that acts as a repressor or an activator. Acts as a transcriptional repressor on minimal promoter containing mu E3 enhancer sequence. Binds to mu E3 DNA sequence of the immunoglobulin heavy-chain gene enhancer. Acts as a transcriptional transactivator on the proximal promoter region of the tartrate-resistant acid phosphatase (TRAP) E-box containing promoter (By similarity). Collaborates with MITF in target gene activation (By similarity). Acts as a transcriptional repressor on minimal promoter containing mu E3 enhancer sequence (By similarity). Binds to mu E3 DNA sequence of the immunoglobulin heavy-chain gene enhancer (By similarity). Binds DNA in a homo- or heterodimeric form.</text>
</comment>
<comment type="subunit">
    <text evidence="1">Homodimer. Forms heterodimers with TFE3. Forms heterodimers with MITF (By similarity). Interacts with MITF (By similarity).</text>
</comment>
<comment type="subcellular location">
    <subcellularLocation>
        <location evidence="2">Nucleus</location>
    </subcellularLocation>
</comment>
<comment type="tissue specificity">
    <text evidence="3">Expressed in kidney, spleen, lung, liver, testis and muscle.</text>
</comment>
<comment type="developmental stage">
    <text evidence="3">Expressed in embryo at 14 dpc and in skeletal muscle at 18 dpc.</text>
</comment>
<comment type="similarity">
    <text evidence="4">Belongs to the MiT/TFE family.</text>
</comment>
<comment type="sequence caution" evidence="4">
    <conflict type="erroneous initiation">
        <sequence resource="EMBL-CDS" id="AAA41523"/>
    </conflict>
    <text>Extended N-terminus.</text>
</comment>
<comment type="sequence caution" evidence="4">
    <conflict type="erroneous termination">
        <sequence resource="EMBL-CDS" id="AAA41523"/>
    </conflict>
    <text>Truncated C-terminus.</text>
</comment>
<proteinExistence type="evidence at protein level"/>
<protein>
    <recommendedName>
        <fullName>Transcription factor EC</fullName>
        <shortName>TFE-C</shortName>
        <shortName>rTFEC</shortName>
    </recommendedName>
</protein>
<dbReference type="EMBL" id="L08812">
    <property type="protein sequence ID" value="AAA41523.1"/>
    <property type="status" value="ALT_SEQ"/>
    <property type="molecule type" value="mRNA"/>
</dbReference>
<dbReference type="RefSeq" id="NP_071774.1">
    <property type="nucleotide sequence ID" value="NM_022379.2"/>
</dbReference>
<dbReference type="SMR" id="Q63302"/>
<dbReference type="FunCoup" id="Q63302">
    <property type="interactions" value="105"/>
</dbReference>
<dbReference type="STRING" id="10116.ENSRNOP00000073175"/>
<dbReference type="PhosphoSitePlus" id="Q63302"/>
<dbReference type="PaxDb" id="10116-ENSRNOP00000008156"/>
<dbReference type="Ensembl" id="ENSRNOT00000086810.2">
    <property type="protein sequence ID" value="ENSRNOP00000073175.1"/>
    <property type="gene ID" value="ENSRNOG00000061595.2"/>
</dbReference>
<dbReference type="GeneID" id="26296"/>
<dbReference type="KEGG" id="rno:26296"/>
<dbReference type="UCSC" id="RGD:3846">
    <property type="organism name" value="rat"/>
</dbReference>
<dbReference type="AGR" id="RGD:3846"/>
<dbReference type="CTD" id="22797"/>
<dbReference type="RGD" id="3846">
    <property type="gene designation" value="Tfec"/>
</dbReference>
<dbReference type="eggNOG" id="KOG1318">
    <property type="taxonomic scope" value="Eukaryota"/>
</dbReference>
<dbReference type="GeneTree" id="ENSGT00940000159404"/>
<dbReference type="HOGENOM" id="CLU_031638_0_0_1"/>
<dbReference type="InParanoid" id="Q63302"/>
<dbReference type="OMA" id="NHENEMD"/>
<dbReference type="OrthoDB" id="6242697at2759"/>
<dbReference type="PhylomeDB" id="Q63302"/>
<dbReference type="TreeFam" id="TF317174"/>
<dbReference type="PRO" id="PR:Q63302"/>
<dbReference type="Proteomes" id="UP000002494">
    <property type="component" value="Chromosome 4"/>
</dbReference>
<dbReference type="Bgee" id="ENSRNOG00000061595">
    <property type="expression patterns" value="Expressed in adult mammalian kidney and 14 other cell types or tissues"/>
</dbReference>
<dbReference type="GO" id="GO:0005829">
    <property type="term" value="C:cytosol"/>
    <property type="evidence" value="ECO:0007669"/>
    <property type="project" value="Ensembl"/>
</dbReference>
<dbReference type="GO" id="GO:0005654">
    <property type="term" value="C:nucleoplasm"/>
    <property type="evidence" value="ECO:0007669"/>
    <property type="project" value="Ensembl"/>
</dbReference>
<dbReference type="GO" id="GO:0005634">
    <property type="term" value="C:nucleus"/>
    <property type="evidence" value="ECO:0000318"/>
    <property type="project" value="GO_Central"/>
</dbReference>
<dbReference type="GO" id="GO:0001228">
    <property type="term" value="F:DNA-binding transcription activator activity, RNA polymerase II-specific"/>
    <property type="evidence" value="ECO:0000314"/>
    <property type="project" value="NTNU_SB"/>
</dbReference>
<dbReference type="GO" id="GO:0000981">
    <property type="term" value="F:DNA-binding transcription factor activity, RNA polymerase II-specific"/>
    <property type="evidence" value="ECO:0000318"/>
    <property type="project" value="GO_Central"/>
</dbReference>
<dbReference type="GO" id="GO:0001227">
    <property type="term" value="F:DNA-binding transcription repressor activity, RNA polymerase II-specific"/>
    <property type="evidence" value="ECO:0000266"/>
    <property type="project" value="RGD"/>
</dbReference>
<dbReference type="GO" id="GO:0046983">
    <property type="term" value="F:protein dimerization activity"/>
    <property type="evidence" value="ECO:0007669"/>
    <property type="project" value="InterPro"/>
</dbReference>
<dbReference type="GO" id="GO:0000978">
    <property type="term" value="F:RNA polymerase II cis-regulatory region sequence-specific DNA binding"/>
    <property type="evidence" value="ECO:0000314"/>
    <property type="project" value="NTNU_SB"/>
</dbReference>
<dbReference type="GO" id="GO:1990837">
    <property type="term" value="F:sequence-specific double-stranded DNA binding"/>
    <property type="evidence" value="ECO:0000266"/>
    <property type="project" value="RGD"/>
</dbReference>
<dbReference type="GO" id="GO:0034605">
    <property type="term" value="P:cellular response to heat"/>
    <property type="evidence" value="ECO:0000266"/>
    <property type="project" value="RGD"/>
</dbReference>
<dbReference type="GO" id="GO:0000122">
    <property type="term" value="P:negative regulation of transcription by RNA polymerase II"/>
    <property type="evidence" value="ECO:0000266"/>
    <property type="project" value="RGD"/>
</dbReference>
<dbReference type="GO" id="GO:0045944">
    <property type="term" value="P:positive regulation of transcription by RNA polymerase II"/>
    <property type="evidence" value="ECO:0000314"/>
    <property type="project" value="NTNU_SB"/>
</dbReference>
<dbReference type="GO" id="GO:0006355">
    <property type="term" value="P:regulation of DNA-templated transcription"/>
    <property type="evidence" value="ECO:0000314"/>
    <property type="project" value="RGD"/>
</dbReference>
<dbReference type="GO" id="GO:0006357">
    <property type="term" value="P:regulation of transcription by RNA polymerase II"/>
    <property type="evidence" value="ECO:0000318"/>
    <property type="project" value="GO_Central"/>
</dbReference>
<dbReference type="CDD" id="cd18926">
    <property type="entry name" value="bHLHzip_MITF"/>
    <property type="match status" value="1"/>
</dbReference>
<dbReference type="FunFam" id="4.10.280.10:FF:000003">
    <property type="entry name" value="microphthalmia-associated transcription factor isoform X1"/>
    <property type="match status" value="1"/>
</dbReference>
<dbReference type="Gene3D" id="4.10.280.10">
    <property type="entry name" value="Helix-loop-helix DNA-binding domain"/>
    <property type="match status" value="1"/>
</dbReference>
<dbReference type="InterPro" id="IPR011598">
    <property type="entry name" value="bHLH_dom"/>
</dbReference>
<dbReference type="InterPro" id="IPR036638">
    <property type="entry name" value="HLH_DNA-bd_sf"/>
</dbReference>
<dbReference type="InterPro" id="IPR021802">
    <property type="entry name" value="MiT/TFE_C"/>
</dbReference>
<dbReference type="PANTHER" id="PTHR45776">
    <property type="entry name" value="MIP04163P"/>
    <property type="match status" value="1"/>
</dbReference>
<dbReference type="PANTHER" id="PTHR45776:SF1">
    <property type="entry name" value="TRANSCRIPTION FACTOR EC"/>
    <property type="match status" value="1"/>
</dbReference>
<dbReference type="Pfam" id="PF11851">
    <property type="entry name" value="DUF3371"/>
    <property type="match status" value="1"/>
</dbReference>
<dbReference type="Pfam" id="PF00010">
    <property type="entry name" value="HLH"/>
    <property type="match status" value="1"/>
</dbReference>
<dbReference type="SMART" id="SM00353">
    <property type="entry name" value="HLH"/>
    <property type="match status" value="1"/>
</dbReference>
<dbReference type="SUPFAM" id="SSF47459">
    <property type="entry name" value="HLH, helix-loop-helix DNA-binding domain"/>
    <property type="match status" value="1"/>
</dbReference>
<dbReference type="PROSITE" id="PS50888">
    <property type="entry name" value="BHLH"/>
    <property type="match status" value="1"/>
</dbReference>
<keyword id="KW-0010">Activator</keyword>
<keyword id="KW-0238">DNA-binding</keyword>
<keyword id="KW-0539">Nucleus</keyword>
<keyword id="KW-1185">Reference proteome</keyword>
<keyword id="KW-0678">Repressor</keyword>
<keyword id="KW-0804">Transcription</keyword>
<keyword id="KW-0805">Transcription regulation</keyword>
<organism>
    <name type="scientific">Rattus norvegicus</name>
    <name type="common">Rat</name>
    <dbReference type="NCBI Taxonomy" id="10116"/>
    <lineage>
        <taxon>Eukaryota</taxon>
        <taxon>Metazoa</taxon>
        <taxon>Chordata</taxon>
        <taxon>Craniata</taxon>
        <taxon>Vertebrata</taxon>
        <taxon>Euteleostomi</taxon>
        <taxon>Mammalia</taxon>
        <taxon>Eutheria</taxon>
        <taxon>Euarchontoglires</taxon>
        <taxon>Glires</taxon>
        <taxon>Rodentia</taxon>
        <taxon>Myomorpha</taxon>
        <taxon>Muroidea</taxon>
        <taxon>Muridae</taxon>
        <taxon>Murinae</taxon>
        <taxon>Rattus</taxon>
    </lineage>
</organism>
<feature type="chain" id="PRO_0000313568" description="Transcription factor EC">
    <location>
        <begin position="1"/>
        <end position="317"/>
    </location>
</feature>
<feature type="domain" description="bHLH" evidence="2">
    <location>
        <begin position="110"/>
        <end position="163"/>
    </location>
</feature>
<feature type="region of interest" description="Necessary for transcriptional transactivation" evidence="1">
    <location>
        <begin position="1"/>
        <end position="90"/>
    </location>
</feature>
<feature type="region of interest" description="Necessary for transcriptional transactivation" evidence="1">
    <location>
        <begin position="242"/>
        <end position="317"/>
    </location>
</feature>
<name>TFEC_RAT</name>